<protein>
    <recommendedName>
        <fullName evidence="1">Na(+)-translocating NADH-quinone reductase subunit E</fullName>
        <shortName evidence="1">Na(+)-NQR subunit E</shortName>
        <shortName evidence="1">Na(+)-translocating NQR subunit E</shortName>
        <ecNumber evidence="1">7.2.1.1</ecNumber>
    </recommendedName>
    <alternativeName>
        <fullName evidence="1">NQR complex subunit E</fullName>
    </alternativeName>
    <alternativeName>
        <fullName evidence="1">NQR-1 subunit E</fullName>
    </alternativeName>
</protein>
<proteinExistence type="inferred from homology"/>
<feature type="chain" id="PRO_1000060211" description="Na(+)-translocating NADH-quinone reductase subunit E">
    <location>
        <begin position="1"/>
        <end position="202"/>
    </location>
</feature>
<feature type="transmembrane region" description="Helical" evidence="1">
    <location>
        <begin position="11"/>
        <end position="31"/>
    </location>
</feature>
<feature type="transmembrane region" description="Helical" evidence="1">
    <location>
        <begin position="35"/>
        <end position="55"/>
    </location>
</feature>
<feature type="transmembrane region" description="Helical" evidence="1">
    <location>
        <begin position="79"/>
        <end position="99"/>
    </location>
</feature>
<feature type="transmembrane region" description="Helical" evidence="1">
    <location>
        <begin position="114"/>
        <end position="134"/>
    </location>
</feature>
<feature type="transmembrane region" description="Helical" evidence="1">
    <location>
        <begin position="144"/>
        <end position="164"/>
    </location>
</feature>
<feature type="transmembrane region" description="Helical" evidence="1">
    <location>
        <begin position="180"/>
        <end position="200"/>
    </location>
</feature>
<comment type="function">
    <text evidence="1">NQR complex catalyzes the reduction of ubiquinone-1 to ubiquinol by two successive reactions, coupled with the transport of Na(+) ions from the cytoplasm to the periplasm. NqrA to NqrE are probably involved in the second step, the conversion of ubisemiquinone to ubiquinol.</text>
</comment>
<comment type="catalytic activity">
    <reaction evidence="1">
        <text>a ubiquinone + n Na(+)(in) + NADH + H(+) = a ubiquinol + n Na(+)(out) + NAD(+)</text>
        <dbReference type="Rhea" id="RHEA:47748"/>
        <dbReference type="Rhea" id="RHEA-COMP:9565"/>
        <dbReference type="Rhea" id="RHEA-COMP:9566"/>
        <dbReference type="ChEBI" id="CHEBI:15378"/>
        <dbReference type="ChEBI" id="CHEBI:16389"/>
        <dbReference type="ChEBI" id="CHEBI:17976"/>
        <dbReference type="ChEBI" id="CHEBI:29101"/>
        <dbReference type="ChEBI" id="CHEBI:57540"/>
        <dbReference type="ChEBI" id="CHEBI:57945"/>
        <dbReference type="EC" id="7.2.1.1"/>
    </reaction>
</comment>
<comment type="subunit">
    <text evidence="1">Composed of six subunits; NqrA, NqrB, NqrC, NqrD, NqrE and NqrF.</text>
</comment>
<comment type="subcellular location">
    <subcellularLocation>
        <location evidence="1">Cell inner membrane</location>
        <topology evidence="1">Multi-pass membrane protein</topology>
    </subcellularLocation>
</comment>
<comment type="similarity">
    <text evidence="1">Belongs to the NqrDE/RnfAE family.</text>
</comment>
<organism>
    <name type="scientific">Stutzerimonas stutzeri (strain A1501)</name>
    <name type="common">Pseudomonas stutzeri</name>
    <dbReference type="NCBI Taxonomy" id="379731"/>
    <lineage>
        <taxon>Bacteria</taxon>
        <taxon>Pseudomonadati</taxon>
        <taxon>Pseudomonadota</taxon>
        <taxon>Gammaproteobacteria</taxon>
        <taxon>Pseudomonadales</taxon>
        <taxon>Pseudomonadaceae</taxon>
        <taxon>Stutzerimonas</taxon>
    </lineage>
</organism>
<reference key="1">
    <citation type="journal article" date="2008" name="Proc. Natl. Acad. Sci. U.S.A.">
        <title>Nitrogen fixation island and rhizosphere competence traits in the genome of root-associated Pseudomonas stutzeri A1501.</title>
        <authorList>
            <person name="Yan Y."/>
            <person name="Yang J."/>
            <person name="Dou Y."/>
            <person name="Chen M."/>
            <person name="Ping S."/>
            <person name="Peng J."/>
            <person name="Lu W."/>
            <person name="Zhang W."/>
            <person name="Yao Z."/>
            <person name="Li H."/>
            <person name="Liu W."/>
            <person name="He S."/>
            <person name="Geng L."/>
            <person name="Zhang X."/>
            <person name="Yang F."/>
            <person name="Yu H."/>
            <person name="Zhan Y."/>
            <person name="Li D."/>
            <person name="Lin Z."/>
            <person name="Wang Y."/>
            <person name="Elmerich C."/>
            <person name="Lin M."/>
            <person name="Jin Q."/>
        </authorList>
    </citation>
    <scope>NUCLEOTIDE SEQUENCE [LARGE SCALE GENOMIC DNA]</scope>
    <source>
        <strain>A1501</strain>
    </source>
</reference>
<keyword id="KW-0997">Cell inner membrane</keyword>
<keyword id="KW-1003">Cell membrane</keyword>
<keyword id="KW-0406">Ion transport</keyword>
<keyword id="KW-0472">Membrane</keyword>
<keyword id="KW-0520">NAD</keyword>
<keyword id="KW-1185">Reference proteome</keyword>
<keyword id="KW-0915">Sodium</keyword>
<keyword id="KW-0739">Sodium transport</keyword>
<keyword id="KW-1278">Translocase</keyword>
<keyword id="KW-0812">Transmembrane</keyword>
<keyword id="KW-1133">Transmembrane helix</keyword>
<keyword id="KW-0813">Transport</keyword>
<keyword id="KW-0830">Ubiquinone</keyword>
<evidence type="ECO:0000255" key="1">
    <source>
        <dbReference type="HAMAP-Rule" id="MF_00429"/>
    </source>
</evidence>
<name>NQRE_STUS1</name>
<dbReference type="EC" id="7.2.1.1" evidence="1"/>
<dbReference type="EMBL" id="CP000304">
    <property type="protein sequence ID" value="ABP80301.1"/>
    <property type="molecule type" value="Genomic_DNA"/>
</dbReference>
<dbReference type="RefSeq" id="WP_011913759.1">
    <property type="nucleotide sequence ID" value="NC_009434.1"/>
</dbReference>
<dbReference type="SMR" id="A4VMV0"/>
<dbReference type="GeneID" id="66821968"/>
<dbReference type="KEGG" id="psa:PST_2651"/>
<dbReference type="eggNOG" id="COG2209">
    <property type="taxonomic scope" value="Bacteria"/>
</dbReference>
<dbReference type="HOGENOM" id="CLU_095255_0_0_6"/>
<dbReference type="Proteomes" id="UP000000233">
    <property type="component" value="Chromosome"/>
</dbReference>
<dbReference type="GO" id="GO:0009276">
    <property type="term" value="C:Gram-negative-bacterium-type cell wall"/>
    <property type="evidence" value="ECO:0007669"/>
    <property type="project" value="InterPro"/>
</dbReference>
<dbReference type="GO" id="GO:0005886">
    <property type="term" value="C:plasma membrane"/>
    <property type="evidence" value="ECO:0007669"/>
    <property type="project" value="UniProtKB-SubCell"/>
</dbReference>
<dbReference type="GO" id="GO:0016655">
    <property type="term" value="F:oxidoreductase activity, acting on NAD(P)H, quinone or similar compound as acceptor"/>
    <property type="evidence" value="ECO:0007669"/>
    <property type="project" value="UniProtKB-UniRule"/>
</dbReference>
<dbReference type="GO" id="GO:0022904">
    <property type="term" value="P:respiratory electron transport chain"/>
    <property type="evidence" value="ECO:0007669"/>
    <property type="project" value="InterPro"/>
</dbReference>
<dbReference type="GO" id="GO:0006814">
    <property type="term" value="P:sodium ion transport"/>
    <property type="evidence" value="ECO:0007669"/>
    <property type="project" value="UniProtKB-UniRule"/>
</dbReference>
<dbReference type="HAMAP" id="MF_00429">
    <property type="entry name" value="NqrE"/>
    <property type="match status" value="1"/>
</dbReference>
<dbReference type="InterPro" id="IPR003667">
    <property type="entry name" value="NqrDE/RnfAE"/>
</dbReference>
<dbReference type="InterPro" id="IPR050133">
    <property type="entry name" value="NqrDE/RnfAE_oxidrdctase"/>
</dbReference>
<dbReference type="InterPro" id="IPR010967">
    <property type="entry name" value="NqrE"/>
</dbReference>
<dbReference type="NCBIfam" id="TIGR01940">
    <property type="entry name" value="nqrE"/>
    <property type="match status" value="1"/>
</dbReference>
<dbReference type="PANTHER" id="PTHR30335">
    <property type="entry name" value="INTEGRAL MEMBRANE PROTEIN OF SOXR-REDUCING COMPLEX"/>
    <property type="match status" value="1"/>
</dbReference>
<dbReference type="PANTHER" id="PTHR30335:SF1">
    <property type="entry name" value="NA(+)-TRANSLOCATING NADH-QUINONE REDUCTASE SUBUNIT E"/>
    <property type="match status" value="1"/>
</dbReference>
<dbReference type="Pfam" id="PF02508">
    <property type="entry name" value="Rnf-Nqr"/>
    <property type="match status" value="1"/>
</dbReference>
<dbReference type="PIRSF" id="PIRSF006102">
    <property type="entry name" value="NQR_DE"/>
    <property type="match status" value="1"/>
</dbReference>
<sequence>MEHYISLFVRAVFIENMALAFFLGMCTFIAISKKVETAIGLGIAVIVVQTITVPANNLIYTYLLKSGALAWAGLPEVDLSFLGLLSYIGVIAAIVQILEMTLDKYVPSLYNALGVFLPLITVNCAIMGGTLFMVERDYNLGESVVYGMGSGLSWALAIALLAGIREKLKYSDVPDGLQGLGITFITIGLMSLGFMSFSGVQL</sequence>
<accession>A4VMV0</accession>
<gene>
    <name evidence="1" type="primary">nqrE</name>
    <name type="ordered locus">PST_2651</name>
</gene>